<accession>H2A0M1</accession>
<name>DRP_PINMG</name>
<proteinExistence type="evidence at protein level"/>
<feature type="signal peptide" evidence="1">
    <location>
        <begin position="1"/>
        <end position="19"/>
    </location>
</feature>
<feature type="chain" id="PRO_0000417942" description="Aspartate-rich protein" evidence="1">
    <location>
        <begin position="20"/>
        <end position="152"/>
    </location>
</feature>
<feature type="region of interest" description="Disordered" evidence="2">
    <location>
        <begin position="82"/>
        <end position="152"/>
    </location>
</feature>
<feature type="compositionally biased region" description="Basic and acidic residues" evidence="2">
    <location>
        <begin position="82"/>
        <end position="113"/>
    </location>
</feature>
<feature type="compositionally biased region" description="Acidic residues" evidence="2">
    <location>
        <begin position="135"/>
        <end position="152"/>
    </location>
</feature>
<keyword id="KW-0903">Direct protein sequencing</keyword>
<keyword id="KW-0964">Secreted</keyword>
<keyword id="KW-0732">Signal</keyword>
<sequence length="152" mass="16954">MQKLLLAVLFFSLLAVATARPKYHKQGRRKGDACRLNCIFDNVVCEIPCKLLFRSRSKYIDCVLPCRRDRVDCYIHCNHFDATPKTEAEPGSLDKGEGTKGEKGKEGKKEKGEYAIGNAESGNGSSGGSNKTHDDDDDDRDDVHENDDENED</sequence>
<organism>
    <name type="scientific">Margaritifera margaritifera</name>
    <name type="common">Freshwater pearl mussel</name>
    <dbReference type="NCBI Taxonomy" id="102329"/>
    <lineage>
        <taxon>Eukaryota</taxon>
        <taxon>Metazoa</taxon>
        <taxon>Spiralia</taxon>
        <taxon>Lophotrochozoa</taxon>
        <taxon>Mollusca</taxon>
        <taxon>Bivalvia</taxon>
        <taxon>Autobranchia</taxon>
        <taxon>Pteriomorphia</taxon>
        <taxon>Pterioida</taxon>
        <taxon>Pterioidea</taxon>
        <taxon>Pteriidae</taxon>
        <taxon>Pinctada</taxon>
    </lineage>
</organism>
<reference evidence="4" key="1">
    <citation type="journal article" date="2010" name="BMC Genomics">
        <title>Transcriptome and proteome analysis of Pinctada margaritifera calcifying mantle and shell: focus on biomineralization.</title>
        <authorList>
            <person name="Joubert C."/>
            <person name="Piquemal D."/>
            <person name="Marie B."/>
            <person name="Manchon L."/>
            <person name="Pierrat F."/>
            <person name="Zanella-Cleon I."/>
            <person name="Cochennec-Laureau N."/>
            <person name="Gueguen Y."/>
            <person name="Montagnani C."/>
        </authorList>
    </citation>
    <scope>NUCLEOTIDE SEQUENCE [MRNA]</scope>
    <scope>IDENTIFICATION</scope>
    <source>
        <tissue>Mantle</tissue>
    </source>
</reference>
<reference key="2">
    <citation type="journal article" date="2012" name="Proc. Natl. Acad. Sci. U.S.A.">
        <title>Different secretory repertoires control the biomineralization processes of prism and nacre deposition of the pearl oyster shell.</title>
        <authorList>
            <person name="Marie B."/>
            <person name="Joubert C."/>
            <person name="Tayale A."/>
            <person name="Zanella-Cleon I."/>
            <person name="Belliard C."/>
            <person name="Piquemal D."/>
            <person name="Cochennec-Laureau N."/>
            <person name="Marin F."/>
            <person name="Gueguen Y."/>
            <person name="Montagnani C."/>
        </authorList>
    </citation>
    <scope>PROTEIN SEQUENCE OF 36-50; 57-68; 86-100 AND 112-131</scope>
    <scope>SUBCELLULAR LOCATION</scope>
    <scope>TISSUE SPECIFICITY</scope>
    <source>
        <tissue>Shell</tissue>
    </source>
</reference>
<protein>
    <recommendedName>
        <fullName>Aspartate-rich protein</fullName>
    </recommendedName>
    <alternativeName>
        <fullName>Prism uncharacterized shell protein 2</fullName>
        <shortName>PUSP2</shortName>
    </alternativeName>
</protein>
<comment type="subcellular location">
    <subcellularLocation>
        <location evidence="3">Secreted</location>
    </subcellularLocation>
</comment>
<comment type="tissue specificity">
    <text evidence="3">Prismatic layer of shell (at protein level). Expressed primarily in the mantle with highest level in the mantle edge and lower level in the mantle pallium.</text>
</comment>
<dbReference type="EMBL" id="HE610388">
    <property type="protein sequence ID" value="CCE46162.1"/>
    <property type="molecule type" value="mRNA"/>
</dbReference>
<dbReference type="GO" id="GO:0005576">
    <property type="term" value="C:extracellular region"/>
    <property type="evidence" value="ECO:0007669"/>
    <property type="project" value="UniProtKB-SubCell"/>
</dbReference>
<evidence type="ECO:0000255" key="1"/>
<evidence type="ECO:0000256" key="2">
    <source>
        <dbReference type="SAM" id="MobiDB-lite"/>
    </source>
</evidence>
<evidence type="ECO:0000269" key="3">
    <source>
    </source>
</evidence>
<evidence type="ECO:0000305" key="4"/>